<keyword id="KW-0963">Cytoplasm</keyword>
<keyword id="KW-0312">Gluconeogenesis</keyword>
<keyword id="KW-0324">Glycolysis</keyword>
<keyword id="KW-0413">Isomerase</keyword>
<sequence length="551" mass="60730">MDIKKLSSLAHCAKTRSIVSLFDQKERANDFSLSTSHLYLDYSKQNITDVELEQLIEIAEDVGLSESITGQFNGDKINNTEGRSVLHTILRAPQVIKQQILGDTLANEVEAAELQMAKVVNDVQKGILTSHTGQRFTDVLAIGIGGSYYGVKVSLSALEHYRDLALSVHVIANVDGGALEEKLKTLNFETTLVVVISKTFTTQETMLNAKAVKQWMLSCASVKDLELNNVPLIIEKQWFAVSSNIEAAKEFGINIKHILPMWDWVGGRFSIWSTVGLPLALAIGNDNFNKLKQGAYEMDVHFKSTDFKNNMPVIMALLGIWNRNALEYPTLAILPYAHSLRALPGYLQQTDMESNGKSVSKSGDKLSWLTAPVVFGQEGTNGQHAFMQLMHQSDDIIPTDFIVALKGRSQYTENHKVLVANCFAQSEALMQGKTLTQVESELEMSALSTAEISLIAPHKTMKGNTPSNTLVMDLLTPETIGSLLALYEHKIFVQGVLWQVNSFDQWGVELGKQLGTRILSAIDGAEDDLLSASSQSLIARFRARSNVTPSV</sequence>
<comment type="function">
    <text evidence="1">Catalyzes the reversible isomerization of glucose-6-phosphate to fructose-6-phosphate.</text>
</comment>
<comment type="catalytic activity">
    <reaction evidence="1">
        <text>alpha-D-glucose 6-phosphate = beta-D-fructose 6-phosphate</text>
        <dbReference type="Rhea" id="RHEA:11816"/>
        <dbReference type="ChEBI" id="CHEBI:57634"/>
        <dbReference type="ChEBI" id="CHEBI:58225"/>
        <dbReference type="EC" id="5.3.1.9"/>
    </reaction>
</comment>
<comment type="pathway">
    <text evidence="1">Carbohydrate biosynthesis; gluconeogenesis.</text>
</comment>
<comment type="pathway">
    <text evidence="1">Carbohydrate degradation; glycolysis; D-glyceraldehyde 3-phosphate and glycerone phosphate from D-glucose: step 2/4.</text>
</comment>
<comment type="subcellular location">
    <subcellularLocation>
        <location evidence="1">Cytoplasm</location>
    </subcellularLocation>
</comment>
<comment type="similarity">
    <text evidence="1">Belongs to the GPI family.</text>
</comment>
<evidence type="ECO:0000255" key="1">
    <source>
        <dbReference type="HAMAP-Rule" id="MF_00473"/>
    </source>
</evidence>
<gene>
    <name evidence="1" type="primary">pgi2</name>
    <name type="ordered locus">CPS_2108</name>
</gene>
<dbReference type="EC" id="5.3.1.9" evidence="1"/>
<dbReference type="EMBL" id="CP000083">
    <property type="protein sequence ID" value="AAZ25825.1"/>
    <property type="molecule type" value="Genomic_DNA"/>
</dbReference>
<dbReference type="RefSeq" id="WP_011042928.1">
    <property type="nucleotide sequence ID" value="NC_003910.7"/>
</dbReference>
<dbReference type="SMR" id="Q483D3"/>
<dbReference type="STRING" id="167879.CPS_2108"/>
<dbReference type="KEGG" id="cps:CPS_2108"/>
<dbReference type="HOGENOM" id="CLU_017947_3_1_6"/>
<dbReference type="UniPathway" id="UPA00109">
    <property type="reaction ID" value="UER00181"/>
</dbReference>
<dbReference type="UniPathway" id="UPA00138"/>
<dbReference type="Proteomes" id="UP000000547">
    <property type="component" value="Chromosome"/>
</dbReference>
<dbReference type="GO" id="GO:0005829">
    <property type="term" value="C:cytosol"/>
    <property type="evidence" value="ECO:0007669"/>
    <property type="project" value="TreeGrafter"/>
</dbReference>
<dbReference type="GO" id="GO:0097367">
    <property type="term" value="F:carbohydrate derivative binding"/>
    <property type="evidence" value="ECO:0007669"/>
    <property type="project" value="InterPro"/>
</dbReference>
<dbReference type="GO" id="GO:0004347">
    <property type="term" value="F:glucose-6-phosphate isomerase activity"/>
    <property type="evidence" value="ECO:0007669"/>
    <property type="project" value="UniProtKB-UniRule"/>
</dbReference>
<dbReference type="GO" id="GO:0048029">
    <property type="term" value="F:monosaccharide binding"/>
    <property type="evidence" value="ECO:0007669"/>
    <property type="project" value="TreeGrafter"/>
</dbReference>
<dbReference type="GO" id="GO:0006094">
    <property type="term" value="P:gluconeogenesis"/>
    <property type="evidence" value="ECO:0007669"/>
    <property type="project" value="UniProtKB-UniRule"/>
</dbReference>
<dbReference type="GO" id="GO:0051156">
    <property type="term" value="P:glucose 6-phosphate metabolic process"/>
    <property type="evidence" value="ECO:0007669"/>
    <property type="project" value="TreeGrafter"/>
</dbReference>
<dbReference type="GO" id="GO:0006096">
    <property type="term" value="P:glycolytic process"/>
    <property type="evidence" value="ECO:0007669"/>
    <property type="project" value="UniProtKB-UniRule"/>
</dbReference>
<dbReference type="CDD" id="cd05015">
    <property type="entry name" value="SIS_PGI_1"/>
    <property type="match status" value="1"/>
</dbReference>
<dbReference type="CDD" id="cd05016">
    <property type="entry name" value="SIS_PGI_2"/>
    <property type="match status" value="1"/>
</dbReference>
<dbReference type="Gene3D" id="1.10.1390.10">
    <property type="match status" value="1"/>
</dbReference>
<dbReference type="Gene3D" id="3.40.50.10490">
    <property type="entry name" value="Glucose-6-phosphate isomerase like protein, domain 1"/>
    <property type="match status" value="2"/>
</dbReference>
<dbReference type="HAMAP" id="MF_00473">
    <property type="entry name" value="G6P_isomerase"/>
    <property type="match status" value="1"/>
</dbReference>
<dbReference type="InterPro" id="IPR001672">
    <property type="entry name" value="G6P_Isomerase"/>
</dbReference>
<dbReference type="InterPro" id="IPR023096">
    <property type="entry name" value="G6P_Isomerase_C"/>
</dbReference>
<dbReference type="InterPro" id="IPR018189">
    <property type="entry name" value="Phosphoglucose_isomerase_CS"/>
</dbReference>
<dbReference type="InterPro" id="IPR046348">
    <property type="entry name" value="SIS_dom_sf"/>
</dbReference>
<dbReference type="InterPro" id="IPR035476">
    <property type="entry name" value="SIS_PGI_1"/>
</dbReference>
<dbReference type="InterPro" id="IPR035482">
    <property type="entry name" value="SIS_PGI_2"/>
</dbReference>
<dbReference type="NCBIfam" id="NF001211">
    <property type="entry name" value="PRK00179.1"/>
    <property type="match status" value="1"/>
</dbReference>
<dbReference type="PANTHER" id="PTHR11469">
    <property type="entry name" value="GLUCOSE-6-PHOSPHATE ISOMERASE"/>
    <property type="match status" value="1"/>
</dbReference>
<dbReference type="PANTHER" id="PTHR11469:SF1">
    <property type="entry name" value="GLUCOSE-6-PHOSPHATE ISOMERASE"/>
    <property type="match status" value="1"/>
</dbReference>
<dbReference type="Pfam" id="PF00342">
    <property type="entry name" value="PGI"/>
    <property type="match status" value="1"/>
</dbReference>
<dbReference type="PRINTS" id="PR00662">
    <property type="entry name" value="G6PISOMERASE"/>
</dbReference>
<dbReference type="SUPFAM" id="SSF53697">
    <property type="entry name" value="SIS domain"/>
    <property type="match status" value="1"/>
</dbReference>
<dbReference type="PROSITE" id="PS00765">
    <property type="entry name" value="P_GLUCOSE_ISOMERASE_1"/>
    <property type="match status" value="1"/>
</dbReference>
<dbReference type="PROSITE" id="PS00174">
    <property type="entry name" value="P_GLUCOSE_ISOMERASE_2"/>
    <property type="match status" value="1"/>
</dbReference>
<dbReference type="PROSITE" id="PS51463">
    <property type="entry name" value="P_GLUCOSE_ISOMERASE_3"/>
    <property type="match status" value="1"/>
</dbReference>
<feature type="chain" id="PRO_0000180630" description="Glucose-6-phosphate isomerase 2">
    <location>
        <begin position="1"/>
        <end position="551"/>
    </location>
</feature>
<feature type="active site" description="Proton donor" evidence="1">
    <location>
        <position position="353"/>
    </location>
</feature>
<feature type="active site" evidence="1">
    <location>
        <position position="384"/>
    </location>
</feature>
<feature type="active site" evidence="1">
    <location>
        <position position="512"/>
    </location>
</feature>
<reference key="1">
    <citation type="journal article" date="2005" name="Proc. Natl. Acad. Sci. U.S.A.">
        <title>The psychrophilic lifestyle as revealed by the genome sequence of Colwellia psychrerythraea 34H through genomic and proteomic analyses.</title>
        <authorList>
            <person name="Methe B.A."/>
            <person name="Nelson K.E."/>
            <person name="Deming J.W."/>
            <person name="Momen B."/>
            <person name="Melamud E."/>
            <person name="Zhang X."/>
            <person name="Moult J."/>
            <person name="Madupu R."/>
            <person name="Nelson W.C."/>
            <person name="Dodson R.J."/>
            <person name="Brinkac L.M."/>
            <person name="Daugherty S.C."/>
            <person name="Durkin A.S."/>
            <person name="DeBoy R.T."/>
            <person name="Kolonay J.F."/>
            <person name="Sullivan S.A."/>
            <person name="Zhou L."/>
            <person name="Davidsen T.M."/>
            <person name="Wu M."/>
            <person name="Huston A.L."/>
            <person name="Lewis M."/>
            <person name="Weaver B."/>
            <person name="Weidman J.F."/>
            <person name="Khouri H."/>
            <person name="Utterback T.R."/>
            <person name="Feldblyum T.V."/>
            <person name="Fraser C.M."/>
        </authorList>
    </citation>
    <scope>NUCLEOTIDE SEQUENCE [LARGE SCALE GENOMIC DNA]</scope>
    <source>
        <strain>34H / ATCC BAA-681</strain>
    </source>
</reference>
<proteinExistence type="inferred from homology"/>
<accession>Q483D3</accession>
<protein>
    <recommendedName>
        <fullName evidence="1">Glucose-6-phosphate isomerase 2</fullName>
        <shortName evidence="1">GPI 2</shortName>
        <ecNumber evidence="1">5.3.1.9</ecNumber>
    </recommendedName>
    <alternativeName>
        <fullName evidence="1">Phosphoglucose isomerase 2</fullName>
        <shortName evidence="1">PGI 2</shortName>
    </alternativeName>
    <alternativeName>
        <fullName evidence="1">Phosphohexose isomerase 2</fullName>
        <shortName evidence="1">PHI 2</shortName>
    </alternativeName>
</protein>
<organism>
    <name type="scientific">Colwellia psychrerythraea (strain 34H / ATCC BAA-681)</name>
    <name type="common">Vibrio psychroerythus</name>
    <dbReference type="NCBI Taxonomy" id="167879"/>
    <lineage>
        <taxon>Bacteria</taxon>
        <taxon>Pseudomonadati</taxon>
        <taxon>Pseudomonadota</taxon>
        <taxon>Gammaproteobacteria</taxon>
        <taxon>Alteromonadales</taxon>
        <taxon>Colwelliaceae</taxon>
        <taxon>Colwellia</taxon>
    </lineage>
</organism>
<name>G6PI2_COLP3</name>